<organism>
    <name type="scientific">Panax ginseng</name>
    <name type="common">Korean ginseng</name>
    <dbReference type="NCBI Taxonomy" id="4054"/>
    <lineage>
        <taxon>Eukaryota</taxon>
        <taxon>Viridiplantae</taxon>
        <taxon>Streptophyta</taxon>
        <taxon>Embryophyta</taxon>
        <taxon>Tracheophyta</taxon>
        <taxon>Spermatophyta</taxon>
        <taxon>Magnoliopsida</taxon>
        <taxon>eudicotyledons</taxon>
        <taxon>Gunneridae</taxon>
        <taxon>Pentapetalae</taxon>
        <taxon>asterids</taxon>
        <taxon>campanulids</taxon>
        <taxon>Apiales</taxon>
        <taxon>Araliaceae</taxon>
        <taxon>Panax</taxon>
    </lineage>
</organism>
<geneLocation type="chloroplast"/>
<evidence type="ECO:0000255" key="1">
    <source>
        <dbReference type="HAMAP-Rule" id="MF_01357"/>
    </source>
</evidence>
<protein>
    <recommendedName>
        <fullName evidence="1">NAD(P)H-quinone oxidoreductase subunit J, chloroplastic</fullName>
        <ecNumber evidence="1">7.1.1.-</ecNumber>
    </recommendedName>
    <alternativeName>
        <fullName>NAD(P)H dehydrogenase subunit J</fullName>
    </alternativeName>
    <alternativeName>
        <fullName evidence="1">NADH-plastoquinone oxidoreductase subunit J</fullName>
    </alternativeName>
</protein>
<comment type="function">
    <text evidence="1">NDH shuttles electrons from NAD(P)H:plastoquinone, via FMN and iron-sulfur (Fe-S) centers, to quinones in the photosynthetic chain and possibly in a chloroplast respiratory chain. The immediate electron acceptor for the enzyme in this species is believed to be plastoquinone. Couples the redox reaction to proton translocation, and thus conserves the redox energy in a proton gradient.</text>
</comment>
<comment type="catalytic activity">
    <reaction evidence="1">
        <text>a plastoquinone + NADH + (n+1) H(+)(in) = a plastoquinol + NAD(+) + n H(+)(out)</text>
        <dbReference type="Rhea" id="RHEA:42608"/>
        <dbReference type="Rhea" id="RHEA-COMP:9561"/>
        <dbReference type="Rhea" id="RHEA-COMP:9562"/>
        <dbReference type="ChEBI" id="CHEBI:15378"/>
        <dbReference type="ChEBI" id="CHEBI:17757"/>
        <dbReference type="ChEBI" id="CHEBI:57540"/>
        <dbReference type="ChEBI" id="CHEBI:57945"/>
        <dbReference type="ChEBI" id="CHEBI:62192"/>
    </reaction>
</comment>
<comment type="catalytic activity">
    <reaction evidence="1">
        <text>a plastoquinone + NADPH + (n+1) H(+)(in) = a plastoquinol + NADP(+) + n H(+)(out)</text>
        <dbReference type="Rhea" id="RHEA:42612"/>
        <dbReference type="Rhea" id="RHEA-COMP:9561"/>
        <dbReference type="Rhea" id="RHEA-COMP:9562"/>
        <dbReference type="ChEBI" id="CHEBI:15378"/>
        <dbReference type="ChEBI" id="CHEBI:17757"/>
        <dbReference type="ChEBI" id="CHEBI:57783"/>
        <dbReference type="ChEBI" id="CHEBI:58349"/>
        <dbReference type="ChEBI" id="CHEBI:62192"/>
    </reaction>
</comment>
<comment type="subunit">
    <text evidence="1">NDH is composed of at least 16 different subunits, 5 of which are encoded in the nucleus.</text>
</comment>
<comment type="subcellular location">
    <subcellularLocation>
        <location evidence="1">Plastid</location>
        <location evidence="1">Chloroplast thylakoid membrane</location>
        <topology evidence="1">Peripheral membrane protein</topology>
        <orientation evidence="1">Stromal side</orientation>
    </subcellularLocation>
</comment>
<comment type="similarity">
    <text evidence="1">Belongs to the complex I 30 kDa subunit family.</text>
</comment>
<accession>Q68S03</accession>
<reference key="1">
    <citation type="journal article" date="2004" name="DNA Res.">
        <title>Complete chloroplast genome sequence from Korea ginseng (Panax schinseng Nees) and comparative analysis of sequence evolution among 17 vascular plants.</title>
        <authorList>
            <person name="Kim K.-J."/>
            <person name="Lee H.-L."/>
        </authorList>
    </citation>
    <scope>NUCLEOTIDE SEQUENCE [LARGE SCALE GENOMIC DNA]</scope>
</reference>
<feature type="chain" id="PRO_0000358294" description="NAD(P)H-quinone oxidoreductase subunit J, chloroplastic">
    <location>
        <begin position="1"/>
        <end position="158"/>
    </location>
</feature>
<sequence length="158" mass="18608">MQGRLSAWLVKHGLIHRSLGFDYQGIETLQIKPEDWHSIAVILYVYGYNYLRSQCAYDVAPGGLLASVYHLTRIEYGVDQPEEVCIKVFAPRRNPRIPSVFWVWKSVDFQERESYDMLGIFYATHPRLKRILMPESWVGWPLRKDYIAPNFYEIQDAH</sequence>
<name>NDHJ_PANGI</name>
<proteinExistence type="inferred from homology"/>
<gene>
    <name evidence="1" type="primary">ndhJ</name>
    <name type="ORF">PSC0508</name>
</gene>
<dbReference type="EC" id="7.1.1.-" evidence="1"/>
<dbReference type="EMBL" id="AY582139">
    <property type="protein sequence ID" value="AAT98512.1"/>
    <property type="molecule type" value="Genomic_DNA"/>
</dbReference>
<dbReference type="RefSeq" id="YP_086969.1">
    <property type="nucleotide sequence ID" value="NC_006290.1"/>
</dbReference>
<dbReference type="SMR" id="Q68S03"/>
<dbReference type="GeneID" id="3021545"/>
<dbReference type="GO" id="GO:0009535">
    <property type="term" value="C:chloroplast thylakoid membrane"/>
    <property type="evidence" value="ECO:0007669"/>
    <property type="project" value="UniProtKB-SubCell"/>
</dbReference>
<dbReference type="GO" id="GO:0008137">
    <property type="term" value="F:NADH dehydrogenase (ubiquinone) activity"/>
    <property type="evidence" value="ECO:0007669"/>
    <property type="project" value="InterPro"/>
</dbReference>
<dbReference type="GO" id="GO:0048038">
    <property type="term" value="F:quinone binding"/>
    <property type="evidence" value="ECO:0007669"/>
    <property type="project" value="UniProtKB-KW"/>
</dbReference>
<dbReference type="GO" id="GO:0019684">
    <property type="term" value="P:photosynthesis, light reaction"/>
    <property type="evidence" value="ECO:0007669"/>
    <property type="project" value="UniProtKB-UniRule"/>
</dbReference>
<dbReference type="FunFam" id="3.30.460.80:FF:000004">
    <property type="entry name" value="NAD(P)H-quinone oxidoreductase subunit J, chloroplastic"/>
    <property type="match status" value="1"/>
</dbReference>
<dbReference type="Gene3D" id="3.30.460.80">
    <property type="entry name" value="NADH:ubiquinone oxidoreductase, 30kDa subunit"/>
    <property type="match status" value="1"/>
</dbReference>
<dbReference type="HAMAP" id="MF_01357">
    <property type="entry name" value="NDH1_NuoC"/>
    <property type="match status" value="1"/>
</dbReference>
<dbReference type="InterPro" id="IPR010218">
    <property type="entry name" value="NADH_DH_suC"/>
</dbReference>
<dbReference type="InterPro" id="IPR037232">
    <property type="entry name" value="NADH_quin_OxRdtase_su_C/D-like"/>
</dbReference>
<dbReference type="InterPro" id="IPR001268">
    <property type="entry name" value="NADH_UbQ_OxRdtase_30kDa_su"/>
</dbReference>
<dbReference type="InterPro" id="IPR020396">
    <property type="entry name" value="NADH_UbQ_OxRdtase_CS"/>
</dbReference>
<dbReference type="NCBIfam" id="NF009141">
    <property type="entry name" value="PRK12494.1"/>
    <property type="match status" value="1"/>
</dbReference>
<dbReference type="PANTHER" id="PTHR10884:SF14">
    <property type="entry name" value="NADH DEHYDROGENASE [UBIQUINONE] IRON-SULFUR PROTEIN 3, MITOCHONDRIAL"/>
    <property type="match status" value="1"/>
</dbReference>
<dbReference type="PANTHER" id="PTHR10884">
    <property type="entry name" value="NADH DEHYDROGENASE UBIQUINONE IRON-SULFUR PROTEIN 3"/>
    <property type="match status" value="1"/>
</dbReference>
<dbReference type="Pfam" id="PF00329">
    <property type="entry name" value="Complex1_30kDa"/>
    <property type="match status" value="1"/>
</dbReference>
<dbReference type="SUPFAM" id="SSF143243">
    <property type="entry name" value="Nqo5-like"/>
    <property type="match status" value="1"/>
</dbReference>
<dbReference type="PROSITE" id="PS00542">
    <property type="entry name" value="COMPLEX1_30K"/>
    <property type="match status" value="1"/>
</dbReference>
<keyword id="KW-0150">Chloroplast</keyword>
<keyword id="KW-0472">Membrane</keyword>
<keyword id="KW-0520">NAD</keyword>
<keyword id="KW-0521">NADP</keyword>
<keyword id="KW-0934">Plastid</keyword>
<keyword id="KW-0618">Plastoquinone</keyword>
<keyword id="KW-0874">Quinone</keyword>
<keyword id="KW-0793">Thylakoid</keyword>
<keyword id="KW-1278">Translocase</keyword>
<keyword id="KW-0813">Transport</keyword>